<proteinExistence type="predicted"/>
<keyword id="KW-1003">Cell membrane</keyword>
<keyword id="KW-0472">Membrane</keyword>
<keyword id="KW-1185">Reference proteome</keyword>
<keyword id="KW-0812">Transmembrane</keyword>
<keyword id="KW-1133">Transmembrane helix</keyword>
<accession>O31514</accession>
<name>YESK_BACSU</name>
<organism>
    <name type="scientific">Bacillus subtilis (strain 168)</name>
    <dbReference type="NCBI Taxonomy" id="224308"/>
    <lineage>
        <taxon>Bacteria</taxon>
        <taxon>Bacillati</taxon>
        <taxon>Bacillota</taxon>
        <taxon>Bacilli</taxon>
        <taxon>Bacillales</taxon>
        <taxon>Bacillaceae</taxon>
        <taxon>Bacillus</taxon>
    </lineage>
</organism>
<gene>
    <name type="primary">yesK</name>
    <name type="ordered locus">BSU06930</name>
</gene>
<feature type="chain" id="PRO_0000049519" description="Uncharacterized protein YesK">
    <location>
        <begin position="1"/>
        <end position="100"/>
    </location>
</feature>
<feature type="transmembrane region" description="Helical" evidence="1">
    <location>
        <begin position="11"/>
        <end position="33"/>
    </location>
</feature>
<feature type="transmembrane region" description="Helical" evidence="1">
    <location>
        <begin position="45"/>
        <end position="64"/>
    </location>
</feature>
<feature type="transmembrane region" description="Helical" evidence="1">
    <location>
        <begin position="68"/>
        <end position="90"/>
    </location>
</feature>
<protein>
    <recommendedName>
        <fullName>Uncharacterized protein YesK</fullName>
    </recommendedName>
</protein>
<dbReference type="EMBL" id="AL009126">
    <property type="protein sequence ID" value="CAB12512.2"/>
    <property type="molecule type" value="Genomic_DNA"/>
</dbReference>
<dbReference type="PIR" id="B69796">
    <property type="entry name" value="B69796"/>
</dbReference>
<dbReference type="RefSeq" id="NP_388574.2">
    <property type="nucleotide sequence ID" value="NC_000964.3"/>
</dbReference>
<dbReference type="RefSeq" id="WP_009966766.1">
    <property type="nucleotide sequence ID" value="NZ_OZ025638.1"/>
</dbReference>
<dbReference type="SMR" id="O31514"/>
<dbReference type="FunCoup" id="O31514">
    <property type="interactions" value="41"/>
</dbReference>
<dbReference type="STRING" id="224308.BSU06930"/>
<dbReference type="PaxDb" id="224308-BSU06930"/>
<dbReference type="EnsemblBacteria" id="CAB12512">
    <property type="protein sequence ID" value="CAB12512"/>
    <property type="gene ID" value="BSU_06930"/>
</dbReference>
<dbReference type="GeneID" id="936069"/>
<dbReference type="KEGG" id="bsu:BSU06930"/>
<dbReference type="PATRIC" id="fig|224308.179.peg.753"/>
<dbReference type="InParanoid" id="O31514"/>
<dbReference type="OrthoDB" id="2892238at2"/>
<dbReference type="BioCyc" id="BSUB:BSU06930-MONOMER"/>
<dbReference type="Proteomes" id="UP000001570">
    <property type="component" value="Chromosome"/>
</dbReference>
<dbReference type="GO" id="GO:0005886">
    <property type="term" value="C:plasma membrane"/>
    <property type="evidence" value="ECO:0007669"/>
    <property type="project" value="UniProtKB-SubCell"/>
</dbReference>
<dbReference type="InterPro" id="IPR025434">
    <property type="entry name" value="YesK-like"/>
</dbReference>
<dbReference type="Pfam" id="PF14150">
    <property type="entry name" value="YesK"/>
    <property type="match status" value="1"/>
</dbReference>
<reference key="1">
    <citation type="journal article" date="1997" name="Nature">
        <title>The complete genome sequence of the Gram-positive bacterium Bacillus subtilis.</title>
        <authorList>
            <person name="Kunst F."/>
            <person name="Ogasawara N."/>
            <person name="Moszer I."/>
            <person name="Albertini A.M."/>
            <person name="Alloni G."/>
            <person name="Azevedo V."/>
            <person name="Bertero M.G."/>
            <person name="Bessieres P."/>
            <person name="Bolotin A."/>
            <person name="Borchert S."/>
            <person name="Borriss R."/>
            <person name="Boursier L."/>
            <person name="Brans A."/>
            <person name="Braun M."/>
            <person name="Brignell S.C."/>
            <person name="Bron S."/>
            <person name="Brouillet S."/>
            <person name="Bruschi C.V."/>
            <person name="Caldwell B."/>
            <person name="Capuano V."/>
            <person name="Carter N.M."/>
            <person name="Choi S.-K."/>
            <person name="Codani J.-J."/>
            <person name="Connerton I.F."/>
            <person name="Cummings N.J."/>
            <person name="Daniel R.A."/>
            <person name="Denizot F."/>
            <person name="Devine K.M."/>
            <person name="Duesterhoeft A."/>
            <person name="Ehrlich S.D."/>
            <person name="Emmerson P.T."/>
            <person name="Entian K.-D."/>
            <person name="Errington J."/>
            <person name="Fabret C."/>
            <person name="Ferrari E."/>
            <person name="Foulger D."/>
            <person name="Fritz C."/>
            <person name="Fujita M."/>
            <person name="Fujita Y."/>
            <person name="Fuma S."/>
            <person name="Galizzi A."/>
            <person name="Galleron N."/>
            <person name="Ghim S.-Y."/>
            <person name="Glaser P."/>
            <person name="Goffeau A."/>
            <person name="Golightly E.J."/>
            <person name="Grandi G."/>
            <person name="Guiseppi G."/>
            <person name="Guy B.J."/>
            <person name="Haga K."/>
            <person name="Haiech J."/>
            <person name="Harwood C.R."/>
            <person name="Henaut A."/>
            <person name="Hilbert H."/>
            <person name="Holsappel S."/>
            <person name="Hosono S."/>
            <person name="Hullo M.-F."/>
            <person name="Itaya M."/>
            <person name="Jones L.-M."/>
            <person name="Joris B."/>
            <person name="Karamata D."/>
            <person name="Kasahara Y."/>
            <person name="Klaerr-Blanchard M."/>
            <person name="Klein C."/>
            <person name="Kobayashi Y."/>
            <person name="Koetter P."/>
            <person name="Koningstein G."/>
            <person name="Krogh S."/>
            <person name="Kumano M."/>
            <person name="Kurita K."/>
            <person name="Lapidus A."/>
            <person name="Lardinois S."/>
            <person name="Lauber J."/>
            <person name="Lazarevic V."/>
            <person name="Lee S.-M."/>
            <person name="Levine A."/>
            <person name="Liu H."/>
            <person name="Masuda S."/>
            <person name="Mauel C."/>
            <person name="Medigue C."/>
            <person name="Medina N."/>
            <person name="Mellado R.P."/>
            <person name="Mizuno M."/>
            <person name="Moestl D."/>
            <person name="Nakai S."/>
            <person name="Noback M."/>
            <person name="Noone D."/>
            <person name="O'Reilly M."/>
            <person name="Ogawa K."/>
            <person name="Ogiwara A."/>
            <person name="Oudega B."/>
            <person name="Park S.-H."/>
            <person name="Parro V."/>
            <person name="Pohl T.M."/>
            <person name="Portetelle D."/>
            <person name="Porwollik S."/>
            <person name="Prescott A.M."/>
            <person name="Presecan E."/>
            <person name="Pujic P."/>
            <person name="Purnelle B."/>
            <person name="Rapoport G."/>
            <person name="Rey M."/>
            <person name="Reynolds S."/>
            <person name="Rieger M."/>
            <person name="Rivolta C."/>
            <person name="Rocha E."/>
            <person name="Roche B."/>
            <person name="Rose M."/>
            <person name="Sadaie Y."/>
            <person name="Sato T."/>
            <person name="Scanlan E."/>
            <person name="Schleich S."/>
            <person name="Schroeter R."/>
            <person name="Scoffone F."/>
            <person name="Sekiguchi J."/>
            <person name="Sekowska A."/>
            <person name="Seror S.J."/>
            <person name="Serror P."/>
            <person name="Shin B.-S."/>
            <person name="Soldo B."/>
            <person name="Sorokin A."/>
            <person name="Tacconi E."/>
            <person name="Takagi T."/>
            <person name="Takahashi H."/>
            <person name="Takemaru K."/>
            <person name="Takeuchi M."/>
            <person name="Tamakoshi A."/>
            <person name="Tanaka T."/>
            <person name="Terpstra P."/>
            <person name="Tognoni A."/>
            <person name="Tosato V."/>
            <person name="Uchiyama S."/>
            <person name="Vandenbol M."/>
            <person name="Vannier F."/>
            <person name="Vassarotti A."/>
            <person name="Viari A."/>
            <person name="Wambutt R."/>
            <person name="Wedler E."/>
            <person name="Wedler H."/>
            <person name="Weitzenegger T."/>
            <person name="Winters P."/>
            <person name="Wipat A."/>
            <person name="Yamamoto H."/>
            <person name="Yamane K."/>
            <person name="Yasumoto K."/>
            <person name="Yata K."/>
            <person name="Yoshida K."/>
            <person name="Yoshikawa H.-F."/>
            <person name="Zumstein E."/>
            <person name="Yoshikawa H."/>
            <person name="Danchin A."/>
        </authorList>
    </citation>
    <scope>NUCLEOTIDE SEQUENCE [LARGE SCALE GENOMIC DNA]</scope>
    <source>
        <strain>168</strain>
    </source>
</reference>
<evidence type="ECO:0000255" key="1"/>
<evidence type="ECO:0000305" key="2"/>
<comment type="subcellular location">
    <subcellularLocation>
        <location evidence="2">Cell membrane</location>
        <topology evidence="2">Multi-pass membrane protein</topology>
    </subcellularLocation>
</comment>
<sequence length="100" mass="11255">MSFSKREAGDVWSILFVTGIVTACLFAGVSVLMRMRFPDKSRPEWMLAGLIVLGVFAIWYSLVYVRGWEGAALGMLGFNVIFGAIAGYLIDKAIRRYRKR</sequence>